<gene>
    <name type="primary">tmub1</name>
</gene>
<organism>
    <name type="scientific">Xenopus laevis</name>
    <name type="common">African clawed frog</name>
    <dbReference type="NCBI Taxonomy" id="8355"/>
    <lineage>
        <taxon>Eukaryota</taxon>
        <taxon>Metazoa</taxon>
        <taxon>Chordata</taxon>
        <taxon>Craniata</taxon>
        <taxon>Vertebrata</taxon>
        <taxon>Euteleostomi</taxon>
        <taxon>Amphibia</taxon>
        <taxon>Batrachia</taxon>
        <taxon>Anura</taxon>
        <taxon>Pipoidea</taxon>
        <taxon>Pipidae</taxon>
        <taxon>Xenopodinae</taxon>
        <taxon>Xenopus</taxon>
        <taxon>Xenopus</taxon>
    </lineage>
</organism>
<feature type="chain" id="PRO_0000370253" description="Transmembrane and ubiquitin-like domain-containing protein 1">
    <location>
        <begin position="1"/>
        <end position="308"/>
    </location>
</feature>
<feature type="transmembrane region" description="Helical" evidence="3">
    <location>
        <begin position="11"/>
        <end position="31"/>
    </location>
</feature>
<feature type="transmembrane region" description="Helical" evidence="3">
    <location>
        <begin position="253"/>
        <end position="273"/>
    </location>
</feature>
<feature type="transmembrane region" description="Helical" evidence="3">
    <location>
        <begin position="283"/>
        <end position="303"/>
    </location>
</feature>
<feature type="domain" description="Ubiquitin-like" evidence="4">
    <location>
        <begin position="169"/>
        <end position="242"/>
    </location>
</feature>
<feature type="region of interest" description="Disordered" evidence="5">
    <location>
        <begin position="39"/>
        <end position="162"/>
    </location>
</feature>
<feature type="compositionally biased region" description="Polar residues" evidence="5">
    <location>
        <begin position="63"/>
        <end position="93"/>
    </location>
</feature>
<feature type="compositionally biased region" description="Low complexity" evidence="5">
    <location>
        <begin position="103"/>
        <end position="115"/>
    </location>
</feature>
<feature type="compositionally biased region" description="Polar residues" evidence="5">
    <location>
        <begin position="132"/>
        <end position="149"/>
    </location>
</feature>
<protein>
    <recommendedName>
        <fullName>Transmembrane and ubiquitin-like domain-containing protein 1</fullName>
    </recommendedName>
</protein>
<reference key="1">
    <citation type="submission" date="2005-10" db="EMBL/GenBank/DDBJ databases">
        <authorList>
            <consortium name="NIH - Xenopus Gene Collection (XGC) project"/>
        </authorList>
    </citation>
    <scope>NUCLEOTIDE SEQUENCE [LARGE SCALE MRNA]</scope>
    <source>
        <tissue>Testis</tissue>
    </source>
</reference>
<proteinExistence type="evidence at transcript level"/>
<evidence type="ECO:0000250" key="1">
    <source>
        <dbReference type="UniProtKB" id="Q9BVT8"/>
    </source>
</evidence>
<evidence type="ECO:0000250" key="2">
    <source>
        <dbReference type="UniProtKB" id="Q9JMG3"/>
    </source>
</evidence>
<evidence type="ECO:0000255" key="3"/>
<evidence type="ECO:0000255" key="4">
    <source>
        <dbReference type="PROSITE-ProRule" id="PRU00214"/>
    </source>
</evidence>
<evidence type="ECO:0000256" key="5">
    <source>
        <dbReference type="SAM" id="MobiDB-lite"/>
    </source>
</evidence>
<evidence type="ECO:0000305" key="6"/>
<comment type="function">
    <text evidence="1 2">May contribute to the regulation of translation during cell-cycle progression. May contribute to the regulation of cell proliferation (By similarity). The membrane form is involved in sterol-regulated ubiquitination and degradation of HMG-CoA reductase HMGCR. May be involved in centrosome assembly.</text>
</comment>
<comment type="subcellular location">
    <subcellularLocation>
        <location evidence="2 6">Membrane</location>
        <topology evidence="6">Multi-pass membrane protein</topology>
    </subcellularLocation>
    <subcellularLocation>
        <location evidence="2">Cytoplasm</location>
    </subcellularLocation>
    <subcellularLocation>
        <location evidence="2">Nucleus</location>
    </subcellularLocation>
</comment>
<name>TMUB1_XENLA</name>
<sequence length="308" mass="33155">MALIEGVGDEVTVLFALVLFFMVLMLAWVSTHTTERAPTHWIRPEPAQGGASSNSQRDFHPGPSQTLTNADPNSETVDSSDSTQSSREFQNAGATPHSEVAFSSSGSTVSTGGSVEYTGAAADSPPDGESHPNFTVSSRDPQAGASSSLRYRGLGDGTTAQSAEEAGTIHLRLKFLNDTERLVTVRLSDTIMYIKRTYFPGQELRVRLIFQGQLLRDDSQTVSSLQLRDGSVLHCHISQHASVPGVGADQANVPLNVGNLLVPLLFLIVMLLWYCQFQYPSLFTGTATACLGGFTLLISAIAFSSYHR</sequence>
<accession>Q3KPV4</accession>
<keyword id="KW-0963">Cytoplasm</keyword>
<keyword id="KW-0472">Membrane</keyword>
<keyword id="KW-0539">Nucleus</keyword>
<keyword id="KW-1185">Reference proteome</keyword>
<keyword id="KW-0812">Transmembrane</keyword>
<keyword id="KW-1133">Transmembrane helix</keyword>
<dbReference type="EMBL" id="BC106532">
    <property type="protein sequence ID" value="AAI06533.1"/>
    <property type="molecule type" value="mRNA"/>
</dbReference>
<dbReference type="RefSeq" id="NP_001089771.1">
    <property type="nucleotide sequence ID" value="NM_001096302.1"/>
</dbReference>
<dbReference type="SMR" id="Q3KPV4"/>
<dbReference type="DNASU" id="734835"/>
<dbReference type="GeneID" id="734835"/>
<dbReference type="KEGG" id="xla:734835"/>
<dbReference type="AGR" id="Xenbase:XB-GENE-6255012"/>
<dbReference type="CTD" id="734835"/>
<dbReference type="Xenbase" id="XB-GENE-6255012">
    <property type="gene designation" value="tmub1.S"/>
</dbReference>
<dbReference type="OMA" id="TLLWYCQ"/>
<dbReference type="OrthoDB" id="161999at2759"/>
<dbReference type="Proteomes" id="UP000186698">
    <property type="component" value="Chromosome 6S"/>
</dbReference>
<dbReference type="Bgee" id="734835">
    <property type="expression patterns" value="Expressed in testis and 19 other cell types or tissues"/>
</dbReference>
<dbReference type="GO" id="GO:0005737">
    <property type="term" value="C:cytoplasm"/>
    <property type="evidence" value="ECO:0007669"/>
    <property type="project" value="UniProtKB-SubCell"/>
</dbReference>
<dbReference type="GO" id="GO:0016020">
    <property type="term" value="C:membrane"/>
    <property type="evidence" value="ECO:0007669"/>
    <property type="project" value="UniProtKB-SubCell"/>
</dbReference>
<dbReference type="GO" id="GO:0005634">
    <property type="term" value="C:nucleus"/>
    <property type="evidence" value="ECO:0007669"/>
    <property type="project" value="UniProtKB-SubCell"/>
</dbReference>
<dbReference type="GO" id="GO:0036503">
    <property type="term" value="P:ERAD pathway"/>
    <property type="evidence" value="ECO:0000318"/>
    <property type="project" value="GO_Central"/>
</dbReference>
<dbReference type="CDD" id="cd17057">
    <property type="entry name" value="Ubl_TMUB1_like"/>
    <property type="match status" value="1"/>
</dbReference>
<dbReference type="Gene3D" id="3.10.20.90">
    <property type="entry name" value="Phosphatidylinositol 3-kinase Catalytic Subunit, Chain A, domain 1"/>
    <property type="match status" value="1"/>
</dbReference>
<dbReference type="InterPro" id="IPR040352">
    <property type="entry name" value="TMUB1/2"/>
</dbReference>
<dbReference type="InterPro" id="IPR000626">
    <property type="entry name" value="Ubiquitin-like_dom"/>
</dbReference>
<dbReference type="InterPro" id="IPR029071">
    <property type="entry name" value="Ubiquitin-like_domsf"/>
</dbReference>
<dbReference type="PANTHER" id="PTHR14557">
    <property type="entry name" value="PROTEIN C7ORF21"/>
    <property type="match status" value="1"/>
</dbReference>
<dbReference type="PANTHER" id="PTHR14557:SF3">
    <property type="entry name" value="TRANSMEMBRANE AND UBIQUITIN-LIKE DOMAIN-CONTAINING PROTEIN 1"/>
    <property type="match status" value="1"/>
</dbReference>
<dbReference type="Pfam" id="PF00240">
    <property type="entry name" value="ubiquitin"/>
    <property type="match status" value="1"/>
</dbReference>
<dbReference type="SMART" id="SM00213">
    <property type="entry name" value="UBQ"/>
    <property type="match status" value="1"/>
</dbReference>
<dbReference type="SUPFAM" id="SSF54236">
    <property type="entry name" value="Ubiquitin-like"/>
    <property type="match status" value="1"/>
</dbReference>
<dbReference type="PROSITE" id="PS50053">
    <property type="entry name" value="UBIQUITIN_2"/>
    <property type="match status" value="1"/>
</dbReference>